<gene>
    <name type="primary">CML11</name>
    <name type="ordered locus">At3g22930</name>
    <name type="ORF">F5N5.10</name>
</gene>
<feature type="chain" id="PRO_0000342891" description="Calmodulin-like protein 11">
    <location>
        <begin position="1"/>
        <end position="173"/>
    </location>
</feature>
<feature type="domain" description="EF-hand 1" evidence="2">
    <location>
        <begin position="31"/>
        <end position="66"/>
    </location>
</feature>
<feature type="domain" description="EF-hand 2" evidence="2">
    <location>
        <begin position="67"/>
        <end position="102"/>
    </location>
</feature>
<feature type="domain" description="EF-hand 3" evidence="2">
    <location>
        <begin position="104"/>
        <end position="139"/>
    </location>
</feature>
<feature type="domain" description="EF-hand 4" evidence="2">
    <location>
        <begin position="140"/>
        <end position="173"/>
    </location>
</feature>
<feature type="region of interest" description="Disordered" evidence="3">
    <location>
        <begin position="1"/>
        <end position="27"/>
    </location>
</feature>
<feature type="compositionally biased region" description="Low complexity" evidence="3">
    <location>
        <begin position="1"/>
        <end position="26"/>
    </location>
</feature>
<feature type="binding site" evidence="2">
    <location>
        <position position="44"/>
    </location>
    <ligand>
        <name>Ca(2+)</name>
        <dbReference type="ChEBI" id="CHEBI:29108"/>
        <label>1</label>
    </ligand>
</feature>
<feature type="binding site" evidence="2">
    <location>
        <position position="46"/>
    </location>
    <ligand>
        <name>Ca(2+)</name>
        <dbReference type="ChEBI" id="CHEBI:29108"/>
        <label>1</label>
    </ligand>
</feature>
<feature type="binding site" evidence="2">
    <location>
        <position position="48"/>
    </location>
    <ligand>
        <name>Ca(2+)</name>
        <dbReference type="ChEBI" id="CHEBI:29108"/>
        <label>1</label>
    </ligand>
</feature>
<feature type="binding site" evidence="2">
    <location>
        <position position="50"/>
    </location>
    <ligand>
        <name>Ca(2+)</name>
        <dbReference type="ChEBI" id="CHEBI:29108"/>
        <label>1</label>
    </ligand>
</feature>
<feature type="binding site" evidence="2">
    <location>
        <position position="55"/>
    </location>
    <ligand>
        <name>Ca(2+)</name>
        <dbReference type="ChEBI" id="CHEBI:29108"/>
        <label>1</label>
    </ligand>
</feature>
<feature type="binding site" evidence="2">
    <location>
        <position position="80"/>
    </location>
    <ligand>
        <name>Ca(2+)</name>
        <dbReference type="ChEBI" id="CHEBI:29108"/>
        <label>2</label>
    </ligand>
</feature>
<feature type="binding site" evidence="2">
    <location>
        <position position="82"/>
    </location>
    <ligand>
        <name>Ca(2+)</name>
        <dbReference type="ChEBI" id="CHEBI:29108"/>
        <label>2</label>
    </ligand>
</feature>
<feature type="binding site" evidence="2">
    <location>
        <position position="84"/>
    </location>
    <ligand>
        <name>Ca(2+)</name>
        <dbReference type="ChEBI" id="CHEBI:29108"/>
        <label>2</label>
    </ligand>
</feature>
<feature type="binding site" evidence="2">
    <location>
        <position position="86"/>
    </location>
    <ligand>
        <name>Ca(2+)</name>
        <dbReference type="ChEBI" id="CHEBI:29108"/>
        <label>2</label>
    </ligand>
</feature>
<feature type="binding site" evidence="2">
    <location>
        <position position="91"/>
    </location>
    <ligand>
        <name>Ca(2+)</name>
        <dbReference type="ChEBI" id="CHEBI:29108"/>
        <label>2</label>
    </ligand>
</feature>
<feature type="binding site" evidence="2">
    <location>
        <position position="117"/>
    </location>
    <ligand>
        <name>Ca(2+)</name>
        <dbReference type="ChEBI" id="CHEBI:29108"/>
        <label>3</label>
    </ligand>
</feature>
<feature type="binding site" evidence="2">
    <location>
        <position position="119"/>
    </location>
    <ligand>
        <name>Ca(2+)</name>
        <dbReference type="ChEBI" id="CHEBI:29108"/>
        <label>3</label>
    </ligand>
</feature>
<feature type="binding site" evidence="2">
    <location>
        <position position="121"/>
    </location>
    <ligand>
        <name>Ca(2+)</name>
        <dbReference type="ChEBI" id="CHEBI:29108"/>
        <label>3</label>
    </ligand>
</feature>
<feature type="binding site" evidence="2">
    <location>
        <position position="123"/>
    </location>
    <ligand>
        <name>Ca(2+)</name>
        <dbReference type="ChEBI" id="CHEBI:29108"/>
        <label>3</label>
    </ligand>
</feature>
<feature type="binding site" evidence="2">
    <location>
        <position position="128"/>
    </location>
    <ligand>
        <name>Ca(2+)</name>
        <dbReference type="ChEBI" id="CHEBI:29108"/>
        <label>3</label>
    </ligand>
</feature>
<feature type="binding site" evidence="2">
    <location>
        <position position="153"/>
    </location>
    <ligand>
        <name>Ca(2+)</name>
        <dbReference type="ChEBI" id="CHEBI:29108"/>
        <label>4</label>
    </ligand>
</feature>
<feature type="binding site" evidence="2">
    <location>
        <position position="155"/>
    </location>
    <ligand>
        <name>Ca(2+)</name>
        <dbReference type="ChEBI" id="CHEBI:29108"/>
        <label>4</label>
    </ligand>
</feature>
<feature type="binding site" evidence="2">
    <location>
        <position position="157"/>
    </location>
    <ligand>
        <name>Ca(2+)</name>
        <dbReference type="ChEBI" id="CHEBI:29108"/>
        <label>4</label>
    </ligand>
</feature>
<feature type="binding site" evidence="2">
    <location>
        <position position="159"/>
    </location>
    <ligand>
        <name>Ca(2+)</name>
        <dbReference type="ChEBI" id="CHEBI:29108"/>
        <label>4</label>
    </ligand>
</feature>
<feature type="binding site" evidence="2">
    <location>
        <position position="164"/>
    </location>
    <ligand>
        <name>Ca(2+)</name>
        <dbReference type="ChEBI" id="CHEBI:29108"/>
        <label>4</label>
    </ligand>
</feature>
<organism>
    <name type="scientific">Arabidopsis thaliana</name>
    <name type="common">Mouse-ear cress</name>
    <dbReference type="NCBI Taxonomy" id="3702"/>
    <lineage>
        <taxon>Eukaryota</taxon>
        <taxon>Viridiplantae</taxon>
        <taxon>Streptophyta</taxon>
        <taxon>Embryophyta</taxon>
        <taxon>Tracheophyta</taxon>
        <taxon>Spermatophyta</taxon>
        <taxon>Magnoliopsida</taxon>
        <taxon>eudicotyledons</taxon>
        <taxon>Gunneridae</taxon>
        <taxon>Pentapetalae</taxon>
        <taxon>rosids</taxon>
        <taxon>malvids</taxon>
        <taxon>Brassicales</taxon>
        <taxon>Brassicaceae</taxon>
        <taxon>Camelineae</taxon>
        <taxon>Arabidopsis</taxon>
    </lineage>
</organism>
<name>CML11_ARATH</name>
<proteinExistence type="evidence at transcript level"/>
<evidence type="ECO:0000250" key="1"/>
<evidence type="ECO:0000255" key="2">
    <source>
        <dbReference type="PROSITE-ProRule" id="PRU00448"/>
    </source>
</evidence>
<evidence type="ECO:0000256" key="3">
    <source>
        <dbReference type="SAM" id="MobiDB-lite"/>
    </source>
</evidence>
<evidence type="ECO:0000305" key="4"/>
<protein>
    <recommendedName>
        <fullName>Calmodulin-like protein 11</fullName>
    </recommendedName>
</protein>
<dbReference type="EMBL" id="AP001300">
    <property type="protein sequence ID" value="BAB03038.1"/>
    <property type="molecule type" value="Genomic_DNA"/>
</dbReference>
<dbReference type="EMBL" id="CP002686">
    <property type="protein sequence ID" value="AEE76692.1"/>
    <property type="molecule type" value="Genomic_DNA"/>
</dbReference>
<dbReference type="EMBL" id="AF428309">
    <property type="protein sequence ID" value="AAL16141.1"/>
    <property type="molecule type" value="mRNA"/>
</dbReference>
<dbReference type="EMBL" id="AY116967">
    <property type="protein sequence ID" value="AAM51601.1"/>
    <property type="molecule type" value="mRNA"/>
</dbReference>
<dbReference type="RefSeq" id="NP_188933.1">
    <property type="nucleotide sequence ID" value="NM_113193.2"/>
</dbReference>
<dbReference type="SMR" id="Q9LIK5"/>
<dbReference type="BioGRID" id="7197">
    <property type="interactions" value="3"/>
</dbReference>
<dbReference type="FunCoup" id="Q9LIK5">
    <property type="interactions" value="215"/>
</dbReference>
<dbReference type="STRING" id="3702.Q9LIK5"/>
<dbReference type="iPTMnet" id="Q9LIK5"/>
<dbReference type="PaxDb" id="3702-AT3G22930.1"/>
<dbReference type="ProteomicsDB" id="241045"/>
<dbReference type="EnsemblPlants" id="AT3G22930.1">
    <property type="protein sequence ID" value="AT3G22930.1"/>
    <property type="gene ID" value="AT3G22930"/>
</dbReference>
<dbReference type="GeneID" id="821865"/>
<dbReference type="Gramene" id="AT3G22930.1">
    <property type="protein sequence ID" value="AT3G22930.1"/>
    <property type="gene ID" value="AT3G22930"/>
</dbReference>
<dbReference type="KEGG" id="ath:AT3G22930"/>
<dbReference type="Araport" id="AT3G22930"/>
<dbReference type="TAIR" id="AT3G22930">
    <property type="gene designation" value="CML11"/>
</dbReference>
<dbReference type="eggNOG" id="KOG0027">
    <property type="taxonomic scope" value="Eukaryota"/>
</dbReference>
<dbReference type="HOGENOM" id="CLU_061288_2_0_1"/>
<dbReference type="InParanoid" id="Q9LIK5"/>
<dbReference type="OMA" id="HLMARKM"/>
<dbReference type="PhylomeDB" id="Q9LIK5"/>
<dbReference type="PRO" id="PR:Q9LIK5"/>
<dbReference type="Proteomes" id="UP000006548">
    <property type="component" value="Chromosome 3"/>
</dbReference>
<dbReference type="ExpressionAtlas" id="Q9LIK5">
    <property type="expression patterns" value="baseline and differential"/>
</dbReference>
<dbReference type="GO" id="GO:0005509">
    <property type="term" value="F:calcium ion binding"/>
    <property type="evidence" value="ECO:0007669"/>
    <property type="project" value="InterPro"/>
</dbReference>
<dbReference type="CDD" id="cd00051">
    <property type="entry name" value="EFh"/>
    <property type="match status" value="1"/>
</dbReference>
<dbReference type="FunFam" id="1.10.238.10:FF:000327">
    <property type="entry name" value="Calmodulin-like protein 11"/>
    <property type="match status" value="1"/>
</dbReference>
<dbReference type="FunFam" id="1.10.238.10:FF:000202">
    <property type="entry name" value="Calmodulin-like protein 8"/>
    <property type="match status" value="1"/>
</dbReference>
<dbReference type="Gene3D" id="1.10.238.10">
    <property type="entry name" value="EF-hand"/>
    <property type="match status" value="3"/>
</dbReference>
<dbReference type="InterPro" id="IPR050230">
    <property type="entry name" value="CALM/Myosin/TropC-like"/>
</dbReference>
<dbReference type="InterPro" id="IPR011992">
    <property type="entry name" value="EF-hand-dom_pair"/>
</dbReference>
<dbReference type="InterPro" id="IPR018247">
    <property type="entry name" value="EF_Hand_1_Ca_BS"/>
</dbReference>
<dbReference type="InterPro" id="IPR002048">
    <property type="entry name" value="EF_hand_dom"/>
</dbReference>
<dbReference type="PANTHER" id="PTHR23048:SF53">
    <property type="entry name" value="CALMODULIN"/>
    <property type="match status" value="1"/>
</dbReference>
<dbReference type="PANTHER" id="PTHR23048">
    <property type="entry name" value="MYOSIN LIGHT CHAIN 1, 3"/>
    <property type="match status" value="1"/>
</dbReference>
<dbReference type="Pfam" id="PF13499">
    <property type="entry name" value="EF-hand_7"/>
    <property type="match status" value="2"/>
</dbReference>
<dbReference type="SMART" id="SM00054">
    <property type="entry name" value="EFh"/>
    <property type="match status" value="4"/>
</dbReference>
<dbReference type="SUPFAM" id="SSF47473">
    <property type="entry name" value="EF-hand"/>
    <property type="match status" value="1"/>
</dbReference>
<dbReference type="PROSITE" id="PS00018">
    <property type="entry name" value="EF_HAND_1"/>
    <property type="match status" value="4"/>
</dbReference>
<dbReference type="PROSITE" id="PS50222">
    <property type="entry name" value="EF_HAND_2"/>
    <property type="match status" value="4"/>
</dbReference>
<comment type="function">
    <text evidence="1">Potential calcium sensor.</text>
</comment>
<comment type="similarity">
    <text evidence="4">Belongs to the calmodulin family.</text>
</comment>
<sequence length="173" mass="20071">MEEIQQQQQQQQQQQQQQQQQQQQQQELTQEQIMEFKEAFCLFDKDGDGCITADELATVIRSLDQNPTEQELQDMITEIDSDGNGTIEFSEFLNLMANQLQETDADEELKEAFKVFDKDQNGYISASELRHVMINLGEKLTDEEVDQMIKEADLDGDGQVNYDEFVRMMMING</sequence>
<accession>Q9LIK5</accession>
<reference key="1">
    <citation type="journal article" date="2000" name="DNA Res.">
        <title>Structural analysis of Arabidopsis thaliana chromosome 3. II. Sequence features of the 4,251,695 bp regions covered by 90 P1, TAC and BAC clones.</title>
        <authorList>
            <person name="Kaneko T."/>
            <person name="Katoh T."/>
            <person name="Sato S."/>
            <person name="Nakamura Y."/>
            <person name="Asamizu E."/>
            <person name="Tabata S."/>
        </authorList>
    </citation>
    <scope>NUCLEOTIDE SEQUENCE [LARGE SCALE GENOMIC DNA]</scope>
    <source>
        <strain>cv. Columbia</strain>
    </source>
</reference>
<reference key="2">
    <citation type="journal article" date="2017" name="Plant J.">
        <title>Araport11: a complete reannotation of the Arabidopsis thaliana reference genome.</title>
        <authorList>
            <person name="Cheng C.Y."/>
            <person name="Krishnakumar V."/>
            <person name="Chan A.P."/>
            <person name="Thibaud-Nissen F."/>
            <person name="Schobel S."/>
            <person name="Town C.D."/>
        </authorList>
    </citation>
    <scope>GENOME REANNOTATION</scope>
    <source>
        <strain>cv. Columbia</strain>
    </source>
</reference>
<reference key="3">
    <citation type="journal article" date="2003" name="Science">
        <title>Empirical analysis of transcriptional activity in the Arabidopsis genome.</title>
        <authorList>
            <person name="Yamada K."/>
            <person name="Lim J."/>
            <person name="Dale J.M."/>
            <person name="Chen H."/>
            <person name="Shinn P."/>
            <person name="Palm C.J."/>
            <person name="Southwick A.M."/>
            <person name="Wu H.C."/>
            <person name="Kim C.J."/>
            <person name="Nguyen M."/>
            <person name="Pham P.K."/>
            <person name="Cheuk R.F."/>
            <person name="Karlin-Newmann G."/>
            <person name="Liu S.X."/>
            <person name="Lam B."/>
            <person name="Sakano H."/>
            <person name="Wu T."/>
            <person name="Yu G."/>
            <person name="Miranda M."/>
            <person name="Quach H.L."/>
            <person name="Tripp M."/>
            <person name="Chang C.H."/>
            <person name="Lee J.M."/>
            <person name="Toriumi M.J."/>
            <person name="Chan M.M."/>
            <person name="Tang C.C."/>
            <person name="Onodera C.S."/>
            <person name="Deng J.M."/>
            <person name="Akiyama K."/>
            <person name="Ansari Y."/>
            <person name="Arakawa T."/>
            <person name="Banh J."/>
            <person name="Banno F."/>
            <person name="Bowser L."/>
            <person name="Brooks S.Y."/>
            <person name="Carninci P."/>
            <person name="Chao Q."/>
            <person name="Choy N."/>
            <person name="Enju A."/>
            <person name="Goldsmith A.D."/>
            <person name="Gurjal M."/>
            <person name="Hansen N.F."/>
            <person name="Hayashizaki Y."/>
            <person name="Johnson-Hopson C."/>
            <person name="Hsuan V.W."/>
            <person name="Iida K."/>
            <person name="Karnes M."/>
            <person name="Khan S."/>
            <person name="Koesema E."/>
            <person name="Ishida J."/>
            <person name="Jiang P.X."/>
            <person name="Jones T."/>
            <person name="Kawai J."/>
            <person name="Kamiya A."/>
            <person name="Meyers C."/>
            <person name="Nakajima M."/>
            <person name="Narusaka M."/>
            <person name="Seki M."/>
            <person name="Sakurai T."/>
            <person name="Satou M."/>
            <person name="Tamse R."/>
            <person name="Vaysberg M."/>
            <person name="Wallender E.K."/>
            <person name="Wong C."/>
            <person name="Yamamura Y."/>
            <person name="Yuan S."/>
            <person name="Shinozaki K."/>
            <person name="Davis R.W."/>
            <person name="Theologis A."/>
            <person name="Ecker J.R."/>
        </authorList>
    </citation>
    <scope>NUCLEOTIDE SEQUENCE [LARGE SCALE MRNA]</scope>
    <source>
        <strain>cv. Columbia</strain>
    </source>
</reference>
<reference key="4">
    <citation type="journal article" date="2003" name="New Phytol.">
        <title>Calmodulins and related potential calcium sensors of Arabidopsis.</title>
        <authorList>
            <person name="McCormack E."/>
            <person name="Braam J."/>
        </authorList>
    </citation>
    <scope>GENE FAMILY</scope>
    <scope>NOMENCLATURE</scope>
</reference>
<keyword id="KW-0106">Calcium</keyword>
<keyword id="KW-0479">Metal-binding</keyword>
<keyword id="KW-1185">Reference proteome</keyword>
<keyword id="KW-0677">Repeat</keyword>